<protein>
    <recommendedName>
        <fullName>RecQ-mediated genome instability protein 1</fullName>
    </recommendedName>
</protein>
<dbReference type="EMBL" id="CU329670">
    <property type="protein sequence ID" value="CAA93226.1"/>
    <property type="molecule type" value="Genomic_DNA"/>
</dbReference>
<dbReference type="PIR" id="T38391">
    <property type="entry name" value="T38391"/>
</dbReference>
<dbReference type="RefSeq" id="NP_594146.1">
    <property type="nucleotide sequence ID" value="NM_001019570.2"/>
</dbReference>
<dbReference type="SMR" id="Q10160"/>
<dbReference type="BioGRID" id="279179">
    <property type="interactions" value="13"/>
</dbReference>
<dbReference type="FunCoup" id="Q10160">
    <property type="interactions" value="30"/>
</dbReference>
<dbReference type="STRING" id="284812.Q10160"/>
<dbReference type="iPTMnet" id="Q10160"/>
<dbReference type="PaxDb" id="4896-SPAC26A3.03c.1"/>
<dbReference type="EnsemblFungi" id="SPAC26A3.03c.1">
    <property type="protein sequence ID" value="SPAC26A3.03c.1:pep"/>
    <property type="gene ID" value="SPAC26A3.03c"/>
</dbReference>
<dbReference type="GeneID" id="2542729"/>
<dbReference type="KEGG" id="spo:2542729"/>
<dbReference type="PomBase" id="SPAC26A3.03c">
    <property type="gene designation" value="rmi1"/>
</dbReference>
<dbReference type="VEuPathDB" id="FungiDB:SPAC26A3.03c"/>
<dbReference type="eggNOG" id="KOG3683">
    <property type="taxonomic scope" value="Eukaryota"/>
</dbReference>
<dbReference type="HOGENOM" id="CLU_1180806_0_0_1"/>
<dbReference type="InParanoid" id="Q10160"/>
<dbReference type="OMA" id="MTSPDQI"/>
<dbReference type="PhylomeDB" id="Q10160"/>
<dbReference type="PRO" id="PR:Q10160"/>
<dbReference type="Proteomes" id="UP000002485">
    <property type="component" value="Chromosome I"/>
</dbReference>
<dbReference type="GO" id="GO:0005737">
    <property type="term" value="C:cytoplasm"/>
    <property type="evidence" value="ECO:0000266"/>
    <property type="project" value="PomBase"/>
</dbReference>
<dbReference type="GO" id="GO:0005634">
    <property type="term" value="C:nucleus"/>
    <property type="evidence" value="ECO:0000266"/>
    <property type="project" value="PomBase"/>
</dbReference>
<dbReference type="GO" id="GO:0031422">
    <property type="term" value="C:RecQ family helicase-topoisomerase III complex"/>
    <property type="evidence" value="ECO:0000314"/>
    <property type="project" value="PomBase"/>
</dbReference>
<dbReference type="GO" id="GO:0000400">
    <property type="term" value="F:four-way junction DNA binding"/>
    <property type="evidence" value="ECO:0000266"/>
    <property type="project" value="PomBase"/>
</dbReference>
<dbReference type="GO" id="GO:0051301">
    <property type="term" value="P:cell division"/>
    <property type="evidence" value="ECO:0007669"/>
    <property type="project" value="UniProtKB-KW"/>
</dbReference>
<dbReference type="GO" id="GO:0000724">
    <property type="term" value="P:double-strand break repair via homologous recombination"/>
    <property type="evidence" value="ECO:0000266"/>
    <property type="project" value="PomBase"/>
</dbReference>
<dbReference type="GO" id="GO:0051321">
    <property type="term" value="P:meiotic cell cycle"/>
    <property type="evidence" value="ECO:0007669"/>
    <property type="project" value="UniProtKB-KW"/>
</dbReference>
<dbReference type="Gene3D" id="2.40.50.770">
    <property type="entry name" value="RecQ-mediated genome instability protein Rmi1, C-terminal domain"/>
    <property type="match status" value="1"/>
</dbReference>
<dbReference type="InterPro" id="IPR049363">
    <property type="entry name" value="RMI1_N"/>
</dbReference>
<dbReference type="InterPro" id="IPR042470">
    <property type="entry name" value="RMI1_N_C_sf"/>
</dbReference>
<dbReference type="InterPro" id="IPR013894">
    <property type="entry name" value="RMI1_OB"/>
</dbReference>
<dbReference type="PANTHER" id="PTHR14790:SF15">
    <property type="entry name" value="RECQ-MEDIATED GENOME INSTABILITY PROTEIN 1"/>
    <property type="match status" value="1"/>
</dbReference>
<dbReference type="PANTHER" id="PTHR14790">
    <property type="entry name" value="RECQ-MEDIATED GENOME INSTABILITY PROTEIN 1 RMI1"/>
    <property type="match status" value="1"/>
</dbReference>
<dbReference type="Pfam" id="PF08585">
    <property type="entry name" value="RMI1_N_C"/>
    <property type="match status" value="1"/>
</dbReference>
<dbReference type="Pfam" id="PF21000">
    <property type="entry name" value="RMI1_N_N"/>
    <property type="match status" value="1"/>
</dbReference>
<dbReference type="SMART" id="SM01161">
    <property type="entry name" value="DUF1767"/>
    <property type="match status" value="1"/>
</dbReference>
<keyword id="KW-0131">Cell cycle</keyword>
<keyword id="KW-0132">Cell division</keyword>
<keyword id="KW-0963">Cytoplasm</keyword>
<keyword id="KW-0227">DNA damage</keyword>
<keyword id="KW-0238">DNA-binding</keyword>
<keyword id="KW-0469">Meiosis</keyword>
<keyword id="KW-0539">Nucleus</keyword>
<keyword id="KW-1185">Reference proteome</keyword>
<feature type="chain" id="PRO_0000116473" description="RecQ-mediated genome instability protein 1">
    <location>
        <begin position="1"/>
        <end position="235"/>
    </location>
</feature>
<organism>
    <name type="scientific">Schizosaccharomyces pombe (strain 972 / ATCC 24843)</name>
    <name type="common">Fission yeast</name>
    <dbReference type="NCBI Taxonomy" id="284812"/>
    <lineage>
        <taxon>Eukaryota</taxon>
        <taxon>Fungi</taxon>
        <taxon>Dikarya</taxon>
        <taxon>Ascomycota</taxon>
        <taxon>Taphrinomycotina</taxon>
        <taxon>Schizosaccharomycetes</taxon>
        <taxon>Schizosaccharomycetales</taxon>
        <taxon>Schizosaccharomycetaceae</taxon>
        <taxon>Schizosaccharomyces</taxon>
    </lineage>
</organism>
<reference key="1">
    <citation type="journal article" date="2002" name="Nature">
        <title>The genome sequence of Schizosaccharomyces pombe.</title>
        <authorList>
            <person name="Wood V."/>
            <person name="Gwilliam R."/>
            <person name="Rajandream M.A."/>
            <person name="Lyne M.H."/>
            <person name="Lyne R."/>
            <person name="Stewart A."/>
            <person name="Sgouros J.G."/>
            <person name="Peat N."/>
            <person name="Hayles J."/>
            <person name="Baker S.G."/>
            <person name="Basham D."/>
            <person name="Bowman S."/>
            <person name="Brooks K."/>
            <person name="Brown D."/>
            <person name="Brown S."/>
            <person name="Chillingworth T."/>
            <person name="Churcher C.M."/>
            <person name="Collins M."/>
            <person name="Connor R."/>
            <person name="Cronin A."/>
            <person name="Davis P."/>
            <person name="Feltwell T."/>
            <person name="Fraser A."/>
            <person name="Gentles S."/>
            <person name="Goble A."/>
            <person name="Hamlin N."/>
            <person name="Harris D.E."/>
            <person name="Hidalgo J."/>
            <person name="Hodgson G."/>
            <person name="Holroyd S."/>
            <person name="Hornsby T."/>
            <person name="Howarth S."/>
            <person name="Huckle E.J."/>
            <person name="Hunt S."/>
            <person name="Jagels K."/>
            <person name="James K.D."/>
            <person name="Jones L."/>
            <person name="Jones M."/>
            <person name="Leather S."/>
            <person name="McDonald S."/>
            <person name="McLean J."/>
            <person name="Mooney P."/>
            <person name="Moule S."/>
            <person name="Mungall K.L."/>
            <person name="Murphy L.D."/>
            <person name="Niblett D."/>
            <person name="Odell C."/>
            <person name="Oliver K."/>
            <person name="O'Neil S."/>
            <person name="Pearson D."/>
            <person name="Quail M.A."/>
            <person name="Rabbinowitsch E."/>
            <person name="Rutherford K.M."/>
            <person name="Rutter S."/>
            <person name="Saunders D."/>
            <person name="Seeger K."/>
            <person name="Sharp S."/>
            <person name="Skelton J."/>
            <person name="Simmonds M.N."/>
            <person name="Squares R."/>
            <person name="Squares S."/>
            <person name="Stevens K."/>
            <person name="Taylor K."/>
            <person name="Taylor R.G."/>
            <person name="Tivey A."/>
            <person name="Walsh S.V."/>
            <person name="Warren T."/>
            <person name="Whitehead S."/>
            <person name="Woodward J.R."/>
            <person name="Volckaert G."/>
            <person name="Aert R."/>
            <person name="Robben J."/>
            <person name="Grymonprez B."/>
            <person name="Weltjens I."/>
            <person name="Vanstreels E."/>
            <person name="Rieger M."/>
            <person name="Schaefer M."/>
            <person name="Mueller-Auer S."/>
            <person name="Gabel C."/>
            <person name="Fuchs M."/>
            <person name="Duesterhoeft A."/>
            <person name="Fritzc C."/>
            <person name="Holzer E."/>
            <person name="Moestl D."/>
            <person name="Hilbert H."/>
            <person name="Borzym K."/>
            <person name="Langer I."/>
            <person name="Beck A."/>
            <person name="Lehrach H."/>
            <person name="Reinhardt R."/>
            <person name="Pohl T.M."/>
            <person name="Eger P."/>
            <person name="Zimmermann W."/>
            <person name="Wedler H."/>
            <person name="Wambutt R."/>
            <person name="Purnelle B."/>
            <person name="Goffeau A."/>
            <person name="Cadieu E."/>
            <person name="Dreano S."/>
            <person name="Gloux S."/>
            <person name="Lelaure V."/>
            <person name="Mottier S."/>
            <person name="Galibert F."/>
            <person name="Aves S.J."/>
            <person name="Xiang Z."/>
            <person name="Hunt C."/>
            <person name="Moore K."/>
            <person name="Hurst S.M."/>
            <person name="Lucas M."/>
            <person name="Rochet M."/>
            <person name="Gaillardin C."/>
            <person name="Tallada V.A."/>
            <person name="Garzon A."/>
            <person name="Thode G."/>
            <person name="Daga R.R."/>
            <person name="Cruzado L."/>
            <person name="Jimenez J."/>
            <person name="Sanchez M."/>
            <person name="del Rey F."/>
            <person name="Benito J."/>
            <person name="Dominguez A."/>
            <person name="Revuelta J.L."/>
            <person name="Moreno S."/>
            <person name="Armstrong J."/>
            <person name="Forsburg S.L."/>
            <person name="Cerutti L."/>
            <person name="Lowe T."/>
            <person name="McCombie W.R."/>
            <person name="Paulsen I."/>
            <person name="Potashkin J."/>
            <person name="Shpakovski G.V."/>
            <person name="Ussery D."/>
            <person name="Barrell B.G."/>
            <person name="Nurse P."/>
        </authorList>
    </citation>
    <scope>NUCLEOTIDE SEQUENCE [LARGE SCALE GENOMIC DNA]</scope>
    <source>
        <strain>972 / ATCC 24843</strain>
    </source>
</reference>
<reference key="2">
    <citation type="journal article" date="2005" name="EMBO J.">
        <title>RMI1/NCE4, a suppressor of genome instability, encodes a member of the RecQ helicase/Topo III complex.</title>
        <authorList>
            <person name="Chang M."/>
            <person name="Bellaoui M."/>
            <person name="Zhang C."/>
            <person name="Desai R."/>
            <person name="Morozov P."/>
            <person name="Delgado-Cruzata L."/>
            <person name="Rothstein R."/>
            <person name="Freyer G.A."/>
            <person name="Boone C."/>
            <person name="Brown G.W."/>
        </authorList>
    </citation>
    <scope>FUNCTION</scope>
</reference>
<proteinExistence type="inferred from homology"/>
<evidence type="ECO:0000250" key="1"/>
<evidence type="ECO:0000269" key="2">
    <source>
    </source>
</evidence>
<evidence type="ECO:0000305" key="3"/>
<gene>
    <name type="primary">rmi1</name>
    <name type="ORF">SPAC26A3.03c</name>
</gene>
<name>RMI1_SCHPO</name>
<sequence length="235" mass="26632">MNQTTTLSTELTELGVRVQNRWLQSLLDYLAKKHSTGANTTPQLVMQYLVASDIRESTTSEGAAPYIVSEQHNVRIENTMLLQIVRVREIGISIVNQLEYLNDLEELKKLKGQKVIRLVHDESGDEEQNDDDGLTEAQDAVQKGSELKKMCRLILEDSNGQRFWGLERKPIKGIQLSTKLGTKLLVKNVLVRRGVLMLDPNNTTILGGSIEEWDKDYFPKRLIEELKGELSKTKA</sequence>
<comment type="function">
    <text evidence="2">Structure-specific DNA-binding protein with a preference for cruciform structures. Also binds single-stranded DNA (ssDNA). Functions together with top3 to maintain genome integrity. Essential for proper meiotic cell division. Required for normal S-phase progression and DNA damage response.</text>
</comment>
<comment type="subcellular location">
    <subcellularLocation>
        <location>Cytoplasm</location>
    </subcellularLocation>
    <subcellularLocation>
        <location evidence="1">Nucleus</location>
    </subcellularLocation>
</comment>
<comment type="similarity">
    <text evidence="3">Belongs to the RMI1 family.</text>
</comment>
<accession>Q10160</accession>